<sequence length="162" mass="17466">MSQLTHINAAGEAHMVDVSGKAETVREARAEAYVEMQATTLAMIIDGSHHKGDVFATARIAGIQAAKRTWELIPLCHPLMLSKVEVNLQAQPEHNRVRIESLCRLTGKTGVEMEALTAASVAALTIYDMCKAVQKDMVIGPVRLLAKSGGKSGDFKVGECHD</sequence>
<gene>
    <name evidence="1" type="primary">moaC</name>
    <name type="ordered locus">KPN78578_07870</name>
    <name type="ORF">KPN_00812</name>
</gene>
<reference key="1">
    <citation type="submission" date="2006-09" db="EMBL/GenBank/DDBJ databases">
        <authorList>
            <consortium name="The Klebsiella pneumonia Genome Sequencing Project"/>
            <person name="McClelland M."/>
            <person name="Sanderson E.K."/>
            <person name="Spieth J."/>
            <person name="Clifton W.S."/>
            <person name="Latreille P."/>
            <person name="Sabo A."/>
            <person name="Pepin K."/>
            <person name="Bhonagiri V."/>
            <person name="Porwollik S."/>
            <person name="Ali J."/>
            <person name="Wilson R.K."/>
        </authorList>
    </citation>
    <scope>NUCLEOTIDE SEQUENCE [LARGE SCALE GENOMIC DNA]</scope>
    <source>
        <strain>ATCC 700721 / MGH 78578</strain>
    </source>
</reference>
<protein>
    <recommendedName>
        <fullName evidence="1">Cyclic pyranopterin monophosphate synthase</fullName>
        <ecNumber evidence="1">4.6.1.17</ecNumber>
    </recommendedName>
    <alternativeName>
        <fullName evidence="1">Molybdenum cofactor biosynthesis protein C</fullName>
    </alternativeName>
</protein>
<proteinExistence type="inferred from homology"/>
<comment type="function">
    <text evidence="1">Catalyzes the conversion of (8S)-3',8-cyclo-7,8-dihydroguanosine 5'-triphosphate to cyclic pyranopterin monophosphate (cPMP).</text>
</comment>
<comment type="catalytic activity">
    <reaction evidence="1">
        <text>(8S)-3',8-cyclo-7,8-dihydroguanosine 5'-triphosphate = cyclic pyranopterin phosphate + diphosphate</text>
        <dbReference type="Rhea" id="RHEA:49580"/>
        <dbReference type="ChEBI" id="CHEBI:33019"/>
        <dbReference type="ChEBI" id="CHEBI:59648"/>
        <dbReference type="ChEBI" id="CHEBI:131766"/>
        <dbReference type="EC" id="4.6.1.17"/>
    </reaction>
</comment>
<comment type="pathway">
    <text evidence="1">Cofactor biosynthesis; molybdopterin biosynthesis.</text>
</comment>
<comment type="subunit">
    <text evidence="1">Homohexamer; trimer of dimers.</text>
</comment>
<comment type="similarity">
    <text evidence="1">Belongs to the MoaC family.</text>
</comment>
<name>MOAC_KLEP7</name>
<feature type="chain" id="PRO_1000054104" description="Cyclic pyranopterin monophosphate synthase">
    <location>
        <begin position="1"/>
        <end position="162"/>
    </location>
</feature>
<feature type="active site" evidence="1">
    <location>
        <position position="128"/>
    </location>
</feature>
<feature type="binding site" evidence="1">
    <location>
        <begin position="75"/>
        <end position="77"/>
    </location>
    <ligand>
        <name>substrate</name>
    </ligand>
</feature>
<feature type="binding site" evidence="1">
    <location>
        <begin position="113"/>
        <end position="114"/>
    </location>
    <ligand>
        <name>substrate</name>
    </ligand>
</feature>
<organism>
    <name type="scientific">Klebsiella pneumoniae subsp. pneumoniae (strain ATCC 700721 / MGH 78578)</name>
    <dbReference type="NCBI Taxonomy" id="272620"/>
    <lineage>
        <taxon>Bacteria</taxon>
        <taxon>Pseudomonadati</taxon>
        <taxon>Pseudomonadota</taxon>
        <taxon>Gammaproteobacteria</taxon>
        <taxon>Enterobacterales</taxon>
        <taxon>Enterobacteriaceae</taxon>
        <taxon>Klebsiella/Raoultella group</taxon>
        <taxon>Klebsiella</taxon>
        <taxon>Klebsiella pneumoniae complex</taxon>
    </lineage>
</organism>
<dbReference type="EC" id="4.6.1.17" evidence="1"/>
<dbReference type="EMBL" id="CP000647">
    <property type="protein sequence ID" value="ABR76248.1"/>
    <property type="molecule type" value="Genomic_DNA"/>
</dbReference>
<dbReference type="RefSeq" id="WP_002895670.1">
    <property type="nucleotide sequence ID" value="NC_009648.1"/>
</dbReference>
<dbReference type="SMR" id="A6T6M7"/>
<dbReference type="STRING" id="272620.KPN_00812"/>
<dbReference type="jPOST" id="A6T6M7"/>
<dbReference type="PaxDb" id="272620-KPN_00812"/>
<dbReference type="EnsemblBacteria" id="ABR76248">
    <property type="protein sequence ID" value="ABR76248"/>
    <property type="gene ID" value="KPN_00812"/>
</dbReference>
<dbReference type="KEGG" id="kpn:KPN_00812"/>
<dbReference type="HOGENOM" id="CLU_074693_1_1_6"/>
<dbReference type="UniPathway" id="UPA00344"/>
<dbReference type="Proteomes" id="UP000000265">
    <property type="component" value="Chromosome"/>
</dbReference>
<dbReference type="GO" id="GO:0061799">
    <property type="term" value="F:cyclic pyranopterin monophosphate synthase activity"/>
    <property type="evidence" value="ECO:0007669"/>
    <property type="project" value="UniProtKB-UniRule"/>
</dbReference>
<dbReference type="GO" id="GO:0006777">
    <property type="term" value="P:Mo-molybdopterin cofactor biosynthetic process"/>
    <property type="evidence" value="ECO:0007669"/>
    <property type="project" value="UniProtKB-UniRule"/>
</dbReference>
<dbReference type="CDD" id="cd01420">
    <property type="entry name" value="MoaC_PE"/>
    <property type="match status" value="1"/>
</dbReference>
<dbReference type="FunFam" id="3.30.70.640:FF:000001">
    <property type="entry name" value="Cyclic pyranopterin monophosphate synthase"/>
    <property type="match status" value="1"/>
</dbReference>
<dbReference type="Gene3D" id="3.30.70.640">
    <property type="entry name" value="Molybdopterin cofactor biosynthesis C (MoaC) domain"/>
    <property type="match status" value="1"/>
</dbReference>
<dbReference type="HAMAP" id="MF_01224_B">
    <property type="entry name" value="MoaC_B"/>
    <property type="match status" value="1"/>
</dbReference>
<dbReference type="InterPro" id="IPR023045">
    <property type="entry name" value="MoaC"/>
</dbReference>
<dbReference type="InterPro" id="IPR047594">
    <property type="entry name" value="MoaC_bact/euk"/>
</dbReference>
<dbReference type="InterPro" id="IPR036522">
    <property type="entry name" value="MoaC_sf"/>
</dbReference>
<dbReference type="InterPro" id="IPR050105">
    <property type="entry name" value="MoCo_biosynth_MoaA/MoaC"/>
</dbReference>
<dbReference type="InterPro" id="IPR002820">
    <property type="entry name" value="Mopterin_CF_biosynth-C_dom"/>
</dbReference>
<dbReference type="NCBIfam" id="TIGR00581">
    <property type="entry name" value="moaC"/>
    <property type="match status" value="1"/>
</dbReference>
<dbReference type="NCBIfam" id="NF006870">
    <property type="entry name" value="PRK09364.1"/>
    <property type="match status" value="1"/>
</dbReference>
<dbReference type="PANTHER" id="PTHR22960">
    <property type="entry name" value="MOLYBDOPTERIN COFACTOR SYNTHESIS PROTEIN A"/>
    <property type="match status" value="1"/>
</dbReference>
<dbReference type="Pfam" id="PF01967">
    <property type="entry name" value="MoaC"/>
    <property type="match status" value="1"/>
</dbReference>
<dbReference type="SUPFAM" id="SSF55040">
    <property type="entry name" value="Molybdenum cofactor biosynthesis protein C, MoaC"/>
    <property type="match status" value="1"/>
</dbReference>
<evidence type="ECO:0000255" key="1">
    <source>
        <dbReference type="HAMAP-Rule" id="MF_01224"/>
    </source>
</evidence>
<accession>A6T6M7</accession>
<keyword id="KW-0456">Lyase</keyword>
<keyword id="KW-0501">Molybdenum cofactor biosynthesis</keyword>